<comment type="function">
    <text evidence="2">RNA-binding protein that function as a pre-mRNA splicing factor. Plays a critical role in both constitutive and enhancer-dependent splicing by mediating protein-protein interactions and protein-RNA interactions required for accurate 3'-splice site selection. Acts by enhancing the binding of U2AF2 to weak pyrimidine tracts. Also participates in the regulation of alternative pre-mRNA splicing. Activates exon 5 skipping of PTPRC during T-cell activation; an event reversed by GFI1. Binds to RNA at the AG dinucleotide at the 3'-splice site (By similarity). Shows a preference for AGC or AGA (By similarity).</text>
</comment>
<comment type="subunit">
    <text evidence="2">Interacts with GFI1, U2AF2 and C1QBP.</text>
</comment>
<comment type="subcellular location">
    <subcellularLocation>
        <location evidence="2">Nucleus</location>
    </subcellularLocation>
    <subcellularLocation>
        <location evidence="2">Nucleus speckle</location>
    </subcellularLocation>
    <subcellularLocation>
        <location evidence="2">Cytoplasm</location>
    </subcellularLocation>
    <text evidence="2">Interaction with C1QBP is required for the nuclear translocation. Displays active nucleo-cytoplasmic shuttling.</text>
</comment>
<comment type="domain">
    <text evidence="1">The second zinc finger in necessary for interaction with GFI1 and for alternative pre-mRNA splicing events.</text>
</comment>
<comment type="domain">
    <text evidence="2">The region 162-220 is essential for the nuclear import of the protein in spite of the absence of a nuclear localization signal (NLS). This region is essential for the interaction with C1QBP, interaction which is required for the nuclear translocation. This region may be involved in the localization in nuclear dot-like structures and it also confers the ability of nucleo-cytoplasmic shuttling.</text>
</comment>
<comment type="similarity">
    <text evidence="7">Belongs to the splicing factor SR family.</text>
</comment>
<comment type="caution">
    <text evidence="7">Orthologs of U2AF1L4 do not appear to exist in lower eukaryotes, Drosophila, C.elegans, plants, or vertebrates such as Xenopus or zebrafish. Existence of circadian and light-inducible alternative splicing of U2AF1L4 similar to the mouse in human and rat is not yet proven.</text>
</comment>
<dbReference type="EMBL" id="BC102151">
    <property type="protein sequence ID" value="AAI02152.1"/>
    <property type="molecule type" value="mRNA"/>
</dbReference>
<dbReference type="RefSeq" id="NP_001029950.1">
    <property type="nucleotide sequence ID" value="NM_001034778.2"/>
</dbReference>
<dbReference type="SMR" id="Q3T127"/>
<dbReference type="FunCoup" id="Q3T127">
    <property type="interactions" value="2895"/>
</dbReference>
<dbReference type="STRING" id="9913.ENSBTAP00000074433"/>
<dbReference type="PaxDb" id="9913-ENSBTAP00000032214"/>
<dbReference type="GeneID" id="615198"/>
<dbReference type="KEGG" id="bta:615198"/>
<dbReference type="CTD" id="199746"/>
<dbReference type="VEuPathDB" id="HostDB:ENSBTAG00000023610"/>
<dbReference type="eggNOG" id="KOG2202">
    <property type="taxonomic scope" value="Eukaryota"/>
</dbReference>
<dbReference type="HOGENOM" id="CLU_059852_1_0_1"/>
<dbReference type="InParanoid" id="Q3T127"/>
<dbReference type="OrthoDB" id="423462at2759"/>
<dbReference type="TreeFam" id="TF300143"/>
<dbReference type="Reactome" id="R-BTA-159236">
    <property type="pathway name" value="Transport of Mature mRNA derived from an Intron-Containing Transcript"/>
</dbReference>
<dbReference type="Reactome" id="R-BTA-72163">
    <property type="pathway name" value="mRNA Splicing - Major Pathway"/>
</dbReference>
<dbReference type="Reactome" id="R-BTA-72187">
    <property type="pathway name" value="mRNA 3'-end processing"/>
</dbReference>
<dbReference type="Reactome" id="R-BTA-73856">
    <property type="pathway name" value="RNA Polymerase II Transcription Termination"/>
</dbReference>
<dbReference type="Proteomes" id="UP000009136">
    <property type="component" value="Chromosome 18"/>
</dbReference>
<dbReference type="Bgee" id="ENSBTAG00000023610">
    <property type="expression patterns" value="Expressed in blood and 106 other cell types or tissues"/>
</dbReference>
<dbReference type="GO" id="GO:0005737">
    <property type="term" value="C:cytoplasm"/>
    <property type="evidence" value="ECO:0007669"/>
    <property type="project" value="UniProtKB-SubCell"/>
</dbReference>
<dbReference type="GO" id="GO:0016607">
    <property type="term" value="C:nuclear speck"/>
    <property type="evidence" value="ECO:0007669"/>
    <property type="project" value="UniProtKB-SubCell"/>
</dbReference>
<dbReference type="GO" id="GO:0005681">
    <property type="term" value="C:spliceosomal complex"/>
    <property type="evidence" value="ECO:0000318"/>
    <property type="project" value="GO_Central"/>
</dbReference>
<dbReference type="GO" id="GO:0089701">
    <property type="term" value="C:U2AF complex"/>
    <property type="evidence" value="ECO:0000318"/>
    <property type="project" value="GO_Central"/>
</dbReference>
<dbReference type="GO" id="GO:0030628">
    <property type="term" value="F:pre-mRNA 3'-splice site binding"/>
    <property type="evidence" value="ECO:0000318"/>
    <property type="project" value="GO_Central"/>
</dbReference>
<dbReference type="GO" id="GO:0008270">
    <property type="term" value="F:zinc ion binding"/>
    <property type="evidence" value="ECO:0007669"/>
    <property type="project" value="UniProtKB-KW"/>
</dbReference>
<dbReference type="GO" id="GO:0000398">
    <property type="term" value="P:mRNA splicing, via spliceosome"/>
    <property type="evidence" value="ECO:0000318"/>
    <property type="project" value="GO_Central"/>
</dbReference>
<dbReference type="CDD" id="cd12538">
    <property type="entry name" value="RRM_U2AF35"/>
    <property type="match status" value="1"/>
</dbReference>
<dbReference type="FunFam" id="3.30.70.330:FF:000055">
    <property type="entry name" value="Splicing factor U2AF 35 kDa subunit"/>
    <property type="match status" value="1"/>
</dbReference>
<dbReference type="Gene3D" id="3.30.70.330">
    <property type="match status" value="1"/>
</dbReference>
<dbReference type="InterPro" id="IPR012677">
    <property type="entry name" value="Nucleotide-bd_a/b_plait_sf"/>
</dbReference>
<dbReference type="InterPro" id="IPR035979">
    <property type="entry name" value="RBD_domain_sf"/>
</dbReference>
<dbReference type="InterPro" id="IPR000504">
    <property type="entry name" value="RRM_dom"/>
</dbReference>
<dbReference type="InterPro" id="IPR003954">
    <property type="entry name" value="RRM_dom_euk"/>
</dbReference>
<dbReference type="InterPro" id="IPR009145">
    <property type="entry name" value="U2AF_small"/>
</dbReference>
<dbReference type="InterPro" id="IPR000571">
    <property type="entry name" value="Znf_CCCH"/>
</dbReference>
<dbReference type="PANTHER" id="PTHR12620">
    <property type="entry name" value="U2 SNRNP AUXILIARY FACTOR, SMALL SUBUNIT"/>
    <property type="match status" value="1"/>
</dbReference>
<dbReference type="Pfam" id="PF00076">
    <property type="entry name" value="RRM_1"/>
    <property type="match status" value="1"/>
</dbReference>
<dbReference type="Pfam" id="PF00642">
    <property type="entry name" value="zf-CCCH"/>
    <property type="match status" value="2"/>
</dbReference>
<dbReference type="PRINTS" id="PR01848">
    <property type="entry name" value="U2AUXFACTOR"/>
</dbReference>
<dbReference type="SMART" id="SM00360">
    <property type="entry name" value="RRM"/>
    <property type="match status" value="1"/>
</dbReference>
<dbReference type="SMART" id="SM00361">
    <property type="entry name" value="RRM_1"/>
    <property type="match status" value="1"/>
</dbReference>
<dbReference type="SMART" id="SM00356">
    <property type="entry name" value="ZnF_C3H1"/>
    <property type="match status" value="2"/>
</dbReference>
<dbReference type="SUPFAM" id="SSF54928">
    <property type="entry name" value="RNA-binding domain, RBD"/>
    <property type="match status" value="1"/>
</dbReference>
<dbReference type="PROSITE" id="PS50102">
    <property type="entry name" value="RRM"/>
    <property type="match status" value="1"/>
</dbReference>
<dbReference type="PROSITE" id="PS50103">
    <property type="entry name" value="ZF_C3H1"/>
    <property type="match status" value="2"/>
</dbReference>
<protein>
    <recommendedName>
        <fullName>Splicing factor U2AF 26 kDa subunit</fullName>
    </recommendedName>
    <alternativeName>
        <fullName>U2 small nuclear RNA auxiliary factor 1-like protein 4</fullName>
        <shortName evidence="2">U2AF1-like 4</shortName>
    </alternativeName>
</protein>
<feature type="initiator methionine" description="Removed" evidence="3">
    <location>
        <position position="1"/>
    </location>
</feature>
<feature type="chain" id="PRO_0000309739" description="Splicing factor U2AF 26 kDa subunit">
    <location>
        <begin position="2"/>
        <end position="220"/>
    </location>
</feature>
<feature type="domain" description="RRM" evidence="4">
    <location>
        <begin position="65"/>
        <end position="147"/>
    </location>
</feature>
<feature type="zinc finger region" description="C3H1-type 1" evidence="5">
    <location>
        <begin position="12"/>
        <end position="40"/>
    </location>
</feature>
<feature type="zinc finger region" description="C3H1-type 2" evidence="5">
    <location>
        <begin position="149"/>
        <end position="176"/>
    </location>
</feature>
<feature type="region of interest" description="Disordered" evidence="6">
    <location>
        <begin position="186"/>
        <end position="220"/>
    </location>
</feature>
<feature type="compositionally biased region" description="Basic residues" evidence="6">
    <location>
        <begin position="189"/>
        <end position="220"/>
    </location>
</feature>
<feature type="modified residue" description="N-acetylalanine" evidence="3">
    <location>
        <position position="2"/>
    </location>
</feature>
<sequence>MAEYLASIFGTEKDKVNCSFYFKIGACRHGDRCSRLHNKPTFSQTIVLLNLYRNPQNTAQTADGSHCHVSDVEVQEHYDNFFEEVFTELQEKYGEIEEMNVCDNLGDHLVGNVYVKFRREEDAERAVVELNNRWFNGQAVHAELSPVTDFRESCCRQYEMGECTRGGFCNFMHLRPISRDLRRQLYGRGPRRRSPPRSHTGHRPRERNRRRSPDHRHGRF</sequence>
<name>U2AF4_BOVIN</name>
<reference key="1">
    <citation type="submission" date="2005-08" db="EMBL/GenBank/DDBJ databases">
        <authorList>
            <consortium name="NIH - Mammalian Gene Collection (MGC) project"/>
        </authorList>
    </citation>
    <scope>NUCLEOTIDE SEQUENCE [LARGE SCALE MRNA]</scope>
    <source>
        <strain>Crossbred X Angus</strain>
        <tissue>Ileum</tissue>
    </source>
</reference>
<accession>Q3T127</accession>
<gene>
    <name type="primary">U2AF1L4</name>
</gene>
<keyword id="KW-0007">Acetylation</keyword>
<keyword id="KW-0963">Cytoplasm</keyword>
<keyword id="KW-0479">Metal-binding</keyword>
<keyword id="KW-0507">mRNA processing</keyword>
<keyword id="KW-0508">mRNA splicing</keyword>
<keyword id="KW-0539">Nucleus</keyword>
<keyword id="KW-1185">Reference proteome</keyword>
<keyword id="KW-0677">Repeat</keyword>
<keyword id="KW-0694">RNA-binding</keyword>
<keyword id="KW-0747">Spliceosome</keyword>
<keyword id="KW-0862">Zinc</keyword>
<keyword id="KW-0863">Zinc-finger</keyword>
<evidence type="ECO:0000250" key="1"/>
<evidence type="ECO:0000250" key="2">
    <source>
        <dbReference type="UniProtKB" id="Q8BGJ9"/>
    </source>
</evidence>
<evidence type="ECO:0000250" key="3">
    <source>
        <dbReference type="UniProtKB" id="Q8WU68"/>
    </source>
</evidence>
<evidence type="ECO:0000255" key="4">
    <source>
        <dbReference type="PROSITE-ProRule" id="PRU00176"/>
    </source>
</evidence>
<evidence type="ECO:0000255" key="5">
    <source>
        <dbReference type="PROSITE-ProRule" id="PRU00723"/>
    </source>
</evidence>
<evidence type="ECO:0000256" key="6">
    <source>
        <dbReference type="SAM" id="MobiDB-lite"/>
    </source>
</evidence>
<evidence type="ECO:0000305" key="7"/>
<proteinExistence type="evidence at transcript level"/>
<organism>
    <name type="scientific">Bos taurus</name>
    <name type="common">Bovine</name>
    <dbReference type="NCBI Taxonomy" id="9913"/>
    <lineage>
        <taxon>Eukaryota</taxon>
        <taxon>Metazoa</taxon>
        <taxon>Chordata</taxon>
        <taxon>Craniata</taxon>
        <taxon>Vertebrata</taxon>
        <taxon>Euteleostomi</taxon>
        <taxon>Mammalia</taxon>
        <taxon>Eutheria</taxon>
        <taxon>Laurasiatheria</taxon>
        <taxon>Artiodactyla</taxon>
        <taxon>Ruminantia</taxon>
        <taxon>Pecora</taxon>
        <taxon>Bovidae</taxon>
        <taxon>Bovinae</taxon>
        <taxon>Bos</taxon>
    </lineage>
</organism>